<gene>
    <name type="ordered locus">MJ1214</name>
</gene>
<proteinExistence type="inferred from homology"/>
<organism>
    <name type="scientific">Methanocaldococcus jannaschii (strain ATCC 43067 / DSM 2661 / JAL-1 / JCM 10045 / NBRC 100440)</name>
    <name type="common">Methanococcus jannaschii</name>
    <dbReference type="NCBI Taxonomy" id="243232"/>
    <lineage>
        <taxon>Archaea</taxon>
        <taxon>Methanobacteriati</taxon>
        <taxon>Methanobacteriota</taxon>
        <taxon>Methanomada group</taxon>
        <taxon>Methanococci</taxon>
        <taxon>Methanococcales</taxon>
        <taxon>Methanocaldococcaceae</taxon>
        <taxon>Methanocaldococcus</taxon>
    </lineage>
</organism>
<evidence type="ECO:0000250" key="1">
    <source>
        <dbReference type="UniProtKB" id="P08956"/>
    </source>
</evidence>
<evidence type="ECO:0000303" key="2">
    <source>
    </source>
</evidence>
<evidence type="ECO:0000305" key="3"/>
<feature type="chain" id="PRO_0000107217" description="Putative type I restriction enzyme MjaVIIIP endonuclease subunit">
    <location>
        <begin position="1"/>
        <end position="1018"/>
    </location>
</feature>
<reference key="1">
    <citation type="journal article" date="1996" name="Science">
        <title>Complete genome sequence of the methanogenic archaeon, Methanococcus jannaschii.</title>
        <authorList>
            <person name="Bult C.J."/>
            <person name="White O."/>
            <person name="Olsen G.J."/>
            <person name="Zhou L."/>
            <person name="Fleischmann R.D."/>
            <person name="Sutton G.G."/>
            <person name="Blake J.A."/>
            <person name="FitzGerald L.M."/>
            <person name="Clayton R.A."/>
            <person name="Gocayne J.D."/>
            <person name="Kerlavage A.R."/>
            <person name="Dougherty B.A."/>
            <person name="Tomb J.-F."/>
            <person name="Adams M.D."/>
            <person name="Reich C.I."/>
            <person name="Overbeek R."/>
            <person name="Kirkness E.F."/>
            <person name="Weinstock K.G."/>
            <person name="Merrick J.M."/>
            <person name="Glodek A."/>
            <person name="Scott J.L."/>
            <person name="Geoghagen N.S.M."/>
            <person name="Weidman J.F."/>
            <person name="Fuhrmann J.L."/>
            <person name="Nguyen D."/>
            <person name="Utterback T.R."/>
            <person name="Kelley J.M."/>
            <person name="Peterson J.D."/>
            <person name="Sadow P.W."/>
            <person name="Hanna M.C."/>
            <person name="Cotton M.D."/>
            <person name="Roberts K.M."/>
            <person name="Hurst M.A."/>
            <person name="Kaine B.P."/>
            <person name="Borodovsky M."/>
            <person name="Klenk H.-P."/>
            <person name="Fraser C.M."/>
            <person name="Smith H.O."/>
            <person name="Woese C.R."/>
            <person name="Venter J.C."/>
        </authorList>
    </citation>
    <scope>NUCLEOTIDE SEQUENCE [LARGE SCALE GENOMIC DNA]</scope>
    <source>
        <strain>ATCC 43067 / DSM 2661 / JAL-1 / JCM 10045 / NBRC 100440</strain>
    </source>
</reference>
<reference key="2">
    <citation type="submission" date="1998-02" db="EMBL/GenBank/DDBJ databases">
        <authorList>
            <person name="Bult C.J."/>
            <person name="White O."/>
            <person name="Olsen G.J."/>
            <person name="Zhou L."/>
            <person name="Fleischmann R.D."/>
            <person name="Sutton G.G."/>
            <person name="Blake J.A."/>
            <person name="FitzGerald L.M."/>
            <person name="Clayton R.A."/>
            <person name="Gocayne J.D."/>
            <person name="Kerlavage A.R."/>
            <person name="Dougherty B.A."/>
            <person name="Tomb J.-F."/>
            <person name="Adams M.D."/>
            <person name="Reich C.I."/>
            <person name="Overbeek R."/>
            <person name="Kirkness E.F."/>
            <person name="Weinstock K.G."/>
            <person name="Merrick J.M."/>
            <person name="Glodek A."/>
            <person name="Scott J.L."/>
            <person name="Geoghagen N.S.M."/>
            <person name="Weidman J.F."/>
            <person name="Fuhrmann J.L."/>
            <person name="Nguyen D."/>
            <person name="Utterback T.R."/>
            <person name="Kelley J.M."/>
            <person name="Peterson J.D."/>
            <person name="Sadow P.W."/>
            <person name="Hanna M.C."/>
            <person name="Cotton M.D."/>
            <person name="Roberts K.M."/>
            <person name="Hurst M.A."/>
            <person name="Kaine B.P."/>
            <person name="Borodovsky M."/>
            <person name="Klenk H.-P."/>
            <person name="Fraser C.M."/>
            <person name="Smith H.O."/>
            <person name="Woese C.R."/>
            <person name="Venter J.C."/>
        </authorList>
    </citation>
    <scope>SEQUENCE REVISION</scope>
</reference>
<reference key="3">
    <citation type="journal article" date="2003" name="Nucleic Acids Res.">
        <title>A nomenclature for restriction enzymes, DNA methyltransferases, homing endonucleases and their genes.</title>
        <authorList>
            <person name="Roberts R.J."/>
            <person name="Belfort M."/>
            <person name="Bestor T."/>
            <person name="Bhagwat A.S."/>
            <person name="Bickle T.A."/>
            <person name="Bitinaite J."/>
            <person name="Blumenthal R.M."/>
            <person name="Degtyarev S.K."/>
            <person name="Dryden D.T."/>
            <person name="Dybvig K."/>
            <person name="Firman K."/>
            <person name="Gromova E.S."/>
            <person name="Gumport R.I."/>
            <person name="Halford S.E."/>
            <person name="Hattman S."/>
            <person name="Heitman J."/>
            <person name="Hornby D.P."/>
            <person name="Janulaitis A."/>
            <person name="Jeltsch A."/>
            <person name="Josephsen J."/>
            <person name="Kiss A."/>
            <person name="Klaenhammer T.R."/>
            <person name="Kobayashi I."/>
            <person name="Kong H."/>
            <person name="Krueger D.H."/>
            <person name="Lacks S."/>
            <person name="Marinus M.G."/>
            <person name="Miyahara M."/>
            <person name="Morgan R.D."/>
            <person name="Murray N.E."/>
            <person name="Nagaraja V."/>
            <person name="Piekarowicz A."/>
            <person name="Pingoud A."/>
            <person name="Raleigh E."/>
            <person name="Rao D.N."/>
            <person name="Reich N."/>
            <person name="Repin V.E."/>
            <person name="Selker E.U."/>
            <person name="Shaw P.C."/>
            <person name="Stein D.C."/>
            <person name="Stoddard B.L."/>
            <person name="Szybalski W."/>
            <person name="Trautner T.A."/>
            <person name="Van Etten J.L."/>
            <person name="Vitor J.M."/>
            <person name="Wilson G.G."/>
            <person name="Xu S.Y."/>
        </authorList>
    </citation>
    <scope>NOMENCLATURE</scope>
</reference>
<accession>Q58611</accession>
<protein>
    <recommendedName>
        <fullName evidence="2">Putative type I restriction enzyme MjaVIIIP endonuclease subunit</fullName>
        <shortName evidence="2">MjaVIIIP</shortName>
        <shortName evidence="3">R protein</shortName>
        <ecNumber evidence="1">3.1.21.3</ecNumber>
    </recommendedName>
</protein>
<comment type="function">
    <text evidence="1 2">The restriction (R) subunit of a type I restriction enzyme that recognizes 5'-GAYN(5)GTAA-3' and cleaves a random distance away. The R subunit is required for both endonuclease and ATPase activities but not for modification. After locating a non-methylated recognition site, the enzyme complex serves as a molecular motor that translocates DNA in an ATP-dependent manner until a collision occurs that triggers cleavage.</text>
</comment>
<comment type="catalytic activity">
    <reaction evidence="1">
        <text>Endonucleolytic cleavage of DNA to give random double-stranded fragments with terminal 5'-phosphates, ATP is simultaneously hydrolyzed.</text>
        <dbReference type="EC" id="3.1.21.3"/>
    </reaction>
</comment>
<comment type="subunit">
    <text evidence="1">The type I restriction/modification system is composed of three polypeptides R, M and S.</text>
</comment>
<comment type="miscellaneous">
    <text evidence="1">Type I restriction and modification enzymes are complex, multifunctional systems which require ATP, S-adenosyl methionine and magnesium as cofactors and, in addition to their endonucleolytic and methylase activities, are potent DNA-dependent ATPases.</text>
</comment>
<comment type="similarity">
    <text evidence="3">Belongs to the HsdR family.</text>
</comment>
<keyword id="KW-0067">ATP-binding</keyword>
<keyword id="KW-0238">DNA-binding</keyword>
<keyword id="KW-0255">Endonuclease</keyword>
<keyword id="KW-0347">Helicase</keyword>
<keyword id="KW-0378">Hydrolase</keyword>
<keyword id="KW-0540">Nuclease</keyword>
<keyword id="KW-0547">Nucleotide-binding</keyword>
<keyword id="KW-1185">Reference proteome</keyword>
<keyword id="KW-0680">Restriction system</keyword>
<name>T1R2_METJA</name>
<sequence>MNKMPIPEIYVHNDIEENLNKLGWKELEGYEGEAFSNYIIKPILEEQLKIINDHIGEYKDEFIEKAINKLINEPKPEEILDYIKNGILITLDKGRKGQVSNRVKLIDYKNIEKNIFNYAHELKFKGNDNIIPDFTLFINGIPIIIIEAKREFSEKETYEEAINQINRYEREAPKLFNYVQFAIVYGDEKLYIPTYPNEEKEDRFKKPYKWKNEKKEEDIWDLLKRERVLDTIKNFIFFSKDRAGRKTKIIPRYMQYWAVKKAYERITNYLNNKDYKNRGLVWHWQGSGKTFEILYLAELFYNEFKNKDPIVFIMVDRRELETQFNDDIIALQNANFKDCFKKINSVEELKGVLEDIKESENNPNISEKGVYLVMMHKFDKNKLKDFIESFGSIDKKEILILRDEAHRTESGKFATLRNKILKNAIAIGFTGTPVHKKDMSTFKEYAYPQEGEFYLDRFFIEESIKEGFTLPLIWRVVKPEDIKDISEEEIKNIIEKLFVDEEDADKIVVSKKEIAEKIKLSDLLKSESSIKEASKYIAEHILEDTENFKFKAMVVAQDRKSCILFKKYLDEYLKEKIKNYNENWTQVVITYIHNDDVEIENYKKEIEKKYGKNVDELNKKWTEDFINKENPKILIVNKKLLTGFDAPILKTIYIHQFLKDYLLLQASARANRPAKNKKYGLIVDLTGILIENYKKAIENYNLYRDEAINKDILNNLFVETSKIWESFLTKLNEFKELFKLIVGIEFDDFIVNLKKQKNSKEFKKIISKIILSDKFDYFYAKLRELIQLFEAVGAYGEKLNYYETYEWLKIISAGINKQMRPKSYKIPYNQIKKEVIKYLEFDTYADIASTSINPQLLENLKNKDEINVIVADMIYYALDTLQNKKEPIYRMIYDRINELKNAYISKTKKNEYVINELINCLNALKTYEEEEKTLSKSEKAIKNMLFYLKNVENCNIKKLPLTEKTLKNLEDKKLIKPSDFDKIKKFLFVDLKNAIKETEKRRKVSNKIVEEIIKPIFI</sequence>
<dbReference type="EC" id="3.1.21.3" evidence="1"/>
<dbReference type="EMBL" id="L77117">
    <property type="protein sequence ID" value="AAB99215.1"/>
    <property type="molecule type" value="Genomic_DNA"/>
</dbReference>
<dbReference type="PIR" id="E64451">
    <property type="entry name" value="E64451"/>
</dbReference>
<dbReference type="SMR" id="Q58611"/>
<dbReference type="STRING" id="243232.MJ_1214"/>
<dbReference type="REBASE" id="3903">
    <property type="entry name" value="MjaVIIIP"/>
</dbReference>
<dbReference type="PaxDb" id="243232-MJ_1214"/>
<dbReference type="EnsemblBacteria" id="AAB99215">
    <property type="protein sequence ID" value="AAB99215"/>
    <property type="gene ID" value="MJ_1214"/>
</dbReference>
<dbReference type="KEGG" id="mja:MJ_1214"/>
<dbReference type="eggNOG" id="arCOG00878">
    <property type="taxonomic scope" value="Archaea"/>
</dbReference>
<dbReference type="HOGENOM" id="CLU_005762_0_0_2"/>
<dbReference type="InParanoid" id="Q58611"/>
<dbReference type="PhylomeDB" id="Q58611"/>
<dbReference type="Proteomes" id="UP000000805">
    <property type="component" value="Chromosome"/>
</dbReference>
<dbReference type="GO" id="GO:0005524">
    <property type="term" value="F:ATP binding"/>
    <property type="evidence" value="ECO:0007669"/>
    <property type="project" value="UniProtKB-KW"/>
</dbReference>
<dbReference type="GO" id="GO:0003677">
    <property type="term" value="F:DNA binding"/>
    <property type="evidence" value="ECO:0007669"/>
    <property type="project" value="UniProtKB-KW"/>
</dbReference>
<dbReference type="GO" id="GO:0004386">
    <property type="term" value="F:helicase activity"/>
    <property type="evidence" value="ECO:0007669"/>
    <property type="project" value="UniProtKB-KW"/>
</dbReference>
<dbReference type="GO" id="GO:0009035">
    <property type="term" value="F:type I site-specific deoxyribonuclease activity"/>
    <property type="evidence" value="ECO:0007669"/>
    <property type="project" value="InterPro"/>
</dbReference>
<dbReference type="GO" id="GO:0009307">
    <property type="term" value="P:DNA restriction-modification system"/>
    <property type="evidence" value="ECO:0007669"/>
    <property type="project" value="UniProtKB-KW"/>
</dbReference>
<dbReference type="CDD" id="cd18030">
    <property type="entry name" value="DEXHc_RE_I_HsdR"/>
    <property type="match status" value="1"/>
</dbReference>
<dbReference type="CDD" id="cd22332">
    <property type="entry name" value="HsdR_N"/>
    <property type="match status" value="1"/>
</dbReference>
<dbReference type="Gene3D" id="3.90.1570.50">
    <property type="match status" value="1"/>
</dbReference>
<dbReference type="Gene3D" id="3.40.50.300">
    <property type="entry name" value="P-loop containing nucleotide triphosphate hydrolases"/>
    <property type="match status" value="2"/>
</dbReference>
<dbReference type="InterPro" id="IPR014001">
    <property type="entry name" value="Helicase_ATP-bd"/>
</dbReference>
<dbReference type="InterPro" id="IPR055180">
    <property type="entry name" value="HsdR_RecA-like_helicase_dom_2"/>
</dbReference>
<dbReference type="InterPro" id="IPR027417">
    <property type="entry name" value="P-loop_NTPase"/>
</dbReference>
<dbReference type="InterPro" id="IPR007409">
    <property type="entry name" value="Restrct_endonuc_type1_HsdR_N"/>
</dbReference>
<dbReference type="InterPro" id="IPR004473">
    <property type="entry name" value="Restrct_endonuc_typeI_HsdR"/>
</dbReference>
<dbReference type="InterPro" id="IPR040980">
    <property type="entry name" value="SWI2_SNF2"/>
</dbReference>
<dbReference type="InterPro" id="IPR051268">
    <property type="entry name" value="Type-I_R_enzyme_R_subunit"/>
</dbReference>
<dbReference type="NCBIfam" id="TIGR00348">
    <property type="entry name" value="hsdR"/>
    <property type="match status" value="1"/>
</dbReference>
<dbReference type="PANTHER" id="PTHR30195:SF15">
    <property type="entry name" value="TYPE I RESTRICTION ENZYME HINDI ENDONUCLEASE SUBUNIT"/>
    <property type="match status" value="1"/>
</dbReference>
<dbReference type="PANTHER" id="PTHR30195">
    <property type="entry name" value="TYPE I SITE-SPECIFIC DEOXYRIBONUCLEASE PROTEIN SUBUNIT M AND R"/>
    <property type="match status" value="1"/>
</dbReference>
<dbReference type="Pfam" id="PF04313">
    <property type="entry name" value="HSDR_N"/>
    <property type="match status" value="1"/>
</dbReference>
<dbReference type="Pfam" id="PF18766">
    <property type="entry name" value="SWI2_SNF2"/>
    <property type="match status" value="1"/>
</dbReference>
<dbReference type="Pfam" id="PF22679">
    <property type="entry name" value="T1R_D3-like"/>
    <property type="match status" value="1"/>
</dbReference>
<dbReference type="SMART" id="SM00487">
    <property type="entry name" value="DEXDc"/>
    <property type="match status" value="1"/>
</dbReference>
<dbReference type="SUPFAM" id="SSF52540">
    <property type="entry name" value="P-loop containing nucleoside triphosphate hydrolases"/>
    <property type="match status" value="2"/>
</dbReference>